<dbReference type="EC" id="3.5.2.9" evidence="1"/>
<dbReference type="EMBL" id="AE017194">
    <property type="protein sequence ID" value="AAS42029.1"/>
    <property type="molecule type" value="Genomic_DNA"/>
</dbReference>
<dbReference type="SMR" id="Q735N3"/>
<dbReference type="KEGG" id="bca:BCE_3119"/>
<dbReference type="HOGENOM" id="CLU_069535_0_0_9"/>
<dbReference type="Proteomes" id="UP000002527">
    <property type="component" value="Chromosome"/>
</dbReference>
<dbReference type="GO" id="GO:0017168">
    <property type="term" value="F:5-oxoprolinase (ATP-hydrolyzing) activity"/>
    <property type="evidence" value="ECO:0007669"/>
    <property type="project" value="UniProtKB-UniRule"/>
</dbReference>
<dbReference type="GO" id="GO:0005524">
    <property type="term" value="F:ATP binding"/>
    <property type="evidence" value="ECO:0007669"/>
    <property type="project" value="UniProtKB-UniRule"/>
</dbReference>
<dbReference type="GO" id="GO:0005975">
    <property type="term" value="P:carbohydrate metabolic process"/>
    <property type="evidence" value="ECO:0007669"/>
    <property type="project" value="InterPro"/>
</dbReference>
<dbReference type="CDD" id="cd10787">
    <property type="entry name" value="LamB_YcsF_like"/>
    <property type="match status" value="1"/>
</dbReference>
<dbReference type="Gene3D" id="3.20.20.370">
    <property type="entry name" value="Glycoside hydrolase/deacetylase"/>
    <property type="match status" value="1"/>
</dbReference>
<dbReference type="HAMAP" id="MF_00691">
    <property type="entry name" value="PxpA"/>
    <property type="match status" value="1"/>
</dbReference>
<dbReference type="InterPro" id="IPR011330">
    <property type="entry name" value="Glyco_hydro/deAcase_b/a-brl"/>
</dbReference>
<dbReference type="InterPro" id="IPR005501">
    <property type="entry name" value="LamB/YcsF/PxpA-like"/>
</dbReference>
<dbReference type="NCBIfam" id="NF003813">
    <property type="entry name" value="PRK05406.1-2"/>
    <property type="match status" value="1"/>
</dbReference>
<dbReference type="NCBIfam" id="NF003814">
    <property type="entry name" value="PRK05406.1-3"/>
    <property type="match status" value="1"/>
</dbReference>
<dbReference type="NCBIfam" id="NF003816">
    <property type="entry name" value="PRK05406.1-5"/>
    <property type="match status" value="1"/>
</dbReference>
<dbReference type="PANTHER" id="PTHR30292:SF0">
    <property type="entry name" value="5-OXOPROLINASE SUBUNIT A"/>
    <property type="match status" value="1"/>
</dbReference>
<dbReference type="PANTHER" id="PTHR30292">
    <property type="entry name" value="UNCHARACTERIZED PROTEIN YBGL-RELATED"/>
    <property type="match status" value="1"/>
</dbReference>
<dbReference type="Pfam" id="PF03746">
    <property type="entry name" value="LamB_YcsF"/>
    <property type="match status" value="1"/>
</dbReference>
<dbReference type="SUPFAM" id="SSF88713">
    <property type="entry name" value="Glycoside hydrolase/deacetylase"/>
    <property type="match status" value="1"/>
</dbReference>
<comment type="function">
    <text evidence="1">Catalyzes the cleavage of 5-oxoproline to form L-glutamate coupled to the hydrolysis of ATP to ADP and inorganic phosphate.</text>
</comment>
<comment type="catalytic activity">
    <reaction evidence="1">
        <text>5-oxo-L-proline + ATP + 2 H2O = L-glutamate + ADP + phosphate + H(+)</text>
        <dbReference type="Rhea" id="RHEA:10348"/>
        <dbReference type="ChEBI" id="CHEBI:15377"/>
        <dbReference type="ChEBI" id="CHEBI:15378"/>
        <dbReference type="ChEBI" id="CHEBI:29985"/>
        <dbReference type="ChEBI" id="CHEBI:30616"/>
        <dbReference type="ChEBI" id="CHEBI:43474"/>
        <dbReference type="ChEBI" id="CHEBI:58402"/>
        <dbReference type="ChEBI" id="CHEBI:456216"/>
        <dbReference type="EC" id="3.5.2.9"/>
    </reaction>
</comment>
<comment type="subunit">
    <text evidence="1">Forms a complex composed of PxpA, PxpB and PxpC.</text>
</comment>
<comment type="similarity">
    <text evidence="1">Belongs to the LamB/PxpA family.</text>
</comment>
<reference key="1">
    <citation type="journal article" date="2004" name="Nucleic Acids Res.">
        <title>The genome sequence of Bacillus cereus ATCC 10987 reveals metabolic adaptations and a large plasmid related to Bacillus anthracis pXO1.</title>
        <authorList>
            <person name="Rasko D.A."/>
            <person name="Ravel J."/>
            <person name="Oekstad O.A."/>
            <person name="Helgason E."/>
            <person name="Cer R.Z."/>
            <person name="Jiang L."/>
            <person name="Shores K.A."/>
            <person name="Fouts D.E."/>
            <person name="Tourasse N.J."/>
            <person name="Angiuoli S.V."/>
            <person name="Kolonay J.F."/>
            <person name="Nelson W.C."/>
            <person name="Kolstoe A.-B."/>
            <person name="Fraser C.M."/>
            <person name="Read T.D."/>
        </authorList>
    </citation>
    <scope>NUCLEOTIDE SEQUENCE [LARGE SCALE GENOMIC DNA]</scope>
    <source>
        <strain>ATCC 10987 / NRS 248</strain>
    </source>
</reference>
<keyword id="KW-0067">ATP-binding</keyword>
<keyword id="KW-0378">Hydrolase</keyword>
<keyword id="KW-0547">Nucleotide-binding</keyword>
<accession>Q735N3</accession>
<name>PXPA_BACC1</name>
<gene>
    <name evidence="1" type="primary">pxpA</name>
    <name type="ordered locus">BCE_3119</name>
</gene>
<evidence type="ECO:0000255" key="1">
    <source>
        <dbReference type="HAMAP-Rule" id="MF_00691"/>
    </source>
</evidence>
<feature type="chain" id="PRO_0000184983" description="5-oxoprolinase subunit A">
    <location>
        <begin position="1"/>
        <end position="253"/>
    </location>
</feature>
<proteinExistence type="inferred from homology"/>
<protein>
    <recommendedName>
        <fullName evidence="1">5-oxoprolinase subunit A</fullName>
        <shortName evidence="1">5-OPase subunit A</shortName>
        <ecNumber evidence="1">3.5.2.9</ecNumber>
    </recommendedName>
    <alternativeName>
        <fullName evidence="1">5-oxoprolinase (ATP-hydrolyzing) subunit A</fullName>
    </alternativeName>
</protein>
<organism>
    <name type="scientific">Bacillus cereus (strain ATCC 10987 / NRS 248)</name>
    <dbReference type="NCBI Taxonomy" id="222523"/>
    <lineage>
        <taxon>Bacteria</taxon>
        <taxon>Bacillati</taxon>
        <taxon>Bacillota</taxon>
        <taxon>Bacilli</taxon>
        <taxon>Bacillales</taxon>
        <taxon>Bacillaceae</taxon>
        <taxon>Bacillus</taxon>
        <taxon>Bacillus cereus group</taxon>
    </lineage>
</organism>
<sequence>MTTIDLNCDLGESFGAYKMGNDDEILPFVSSINVACGFHAGDPSVMRQTVEKALQHNVAIGAHPGFPDLIGFGRRNMNVSASEVYDYVLYQIGALDAFVKAAGGKMQHVKPHGALYNMAATNPEIADAIAKAIYHSNPNLLLYGLANSEAFIQAAEKYNITLVQEAFADRTYKQDGTLTSRTEENALIKNEDEAIKQVLQMVKEGYVNSVNGEKVEVQAKTICLHGDSEKAVQFAERIYRTFELNGISICAPK</sequence>